<name>PANC_NITOC</name>
<protein>
    <recommendedName>
        <fullName evidence="1">Pantothenate synthetase</fullName>
        <shortName evidence="1">PS</shortName>
        <ecNumber evidence="1">6.3.2.1</ecNumber>
    </recommendedName>
    <alternativeName>
        <fullName evidence="1">Pantoate--beta-alanine ligase</fullName>
    </alternativeName>
    <alternativeName>
        <fullName evidence="1">Pantoate-activating enzyme</fullName>
    </alternativeName>
</protein>
<organism>
    <name type="scientific">Nitrosococcus oceani (strain ATCC 19707 / BCRC 17464 / JCM 30415 / NCIMB 11848 / C-107)</name>
    <dbReference type="NCBI Taxonomy" id="323261"/>
    <lineage>
        <taxon>Bacteria</taxon>
        <taxon>Pseudomonadati</taxon>
        <taxon>Pseudomonadota</taxon>
        <taxon>Gammaproteobacteria</taxon>
        <taxon>Chromatiales</taxon>
        <taxon>Chromatiaceae</taxon>
        <taxon>Nitrosococcus</taxon>
    </lineage>
</organism>
<gene>
    <name evidence="1" type="primary">panC</name>
    <name type="ordered locus">Noc_0886</name>
</gene>
<evidence type="ECO:0000255" key="1">
    <source>
        <dbReference type="HAMAP-Rule" id="MF_00158"/>
    </source>
</evidence>
<reference key="1">
    <citation type="journal article" date="2006" name="Appl. Environ. Microbiol.">
        <title>Complete genome sequence of the marine, chemolithoautotrophic, ammonia-oxidizing bacterium Nitrosococcus oceani ATCC 19707.</title>
        <authorList>
            <person name="Klotz M.G."/>
            <person name="Arp D.J."/>
            <person name="Chain P.S.G."/>
            <person name="El-Sheikh A.F."/>
            <person name="Hauser L.J."/>
            <person name="Hommes N.G."/>
            <person name="Larimer F.W."/>
            <person name="Malfatti S.A."/>
            <person name="Norton J.M."/>
            <person name="Poret-Peterson A.T."/>
            <person name="Vergez L.M."/>
            <person name="Ward B.B."/>
        </authorList>
    </citation>
    <scope>NUCLEOTIDE SEQUENCE [LARGE SCALE GENOMIC DNA]</scope>
    <source>
        <strain>ATCC 19707 / BCRC 17464 / JCM 30415 / NCIMB 11848 / C-107</strain>
    </source>
</reference>
<sequence>MRVLRTVAAVRSAVEGWRASHERVALVPTMGNLHRGHLALVERAAQLADRVIVSIFVNPLQFNDRDDYSRYPRTFEKDQQYLDEYGVAVVFAPSLEDIYPQRLENVTHVEVPGLSDILEGASRLGHFRGVTTVVAVLFNIIQPQVAVFGEKDYQQLLIIRRMVADLLMPVEVESIATVRDKDGLALSSRNSYLTKEERARAPILFGALSHAAETIKEGWRNFSILEEEGRQRLVTAGFCPDYFHIRRAEDLAEPGGRENNLVVLAAAYLGKARLIDNMQVQLKSVD</sequence>
<proteinExistence type="inferred from homology"/>
<dbReference type="EC" id="6.3.2.1" evidence="1"/>
<dbReference type="EMBL" id="CP000127">
    <property type="protein sequence ID" value="ABA57398.1"/>
    <property type="molecule type" value="Genomic_DNA"/>
</dbReference>
<dbReference type="RefSeq" id="WP_002811762.1">
    <property type="nucleotide sequence ID" value="NC_007484.1"/>
</dbReference>
<dbReference type="SMR" id="Q3JCP8"/>
<dbReference type="FunCoup" id="Q3JCP8">
    <property type="interactions" value="568"/>
</dbReference>
<dbReference type="STRING" id="323261.Noc_0886"/>
<dbReference type="KEGG" id="noc:Noc_0886"/>
<dbReference type="eggNOG" id="COG0414">
    <property type="taxonomic scope" value="Bacteria"/>
</dbReference>
<dbReference type="HOGENOM" id="CLU_047148_0_0_6"/>
<dbReference type="InParanoid" id="Q3JCP8"/>
<dbReference type="UniPathway" id="UPA00028">
    <property type="reaction ID" value="UER00005"/>
</dbReference>
<dbReference type="Proteomes" id="UP000006838">
    <property type="component" value="Chromosome"/>
</dbReference>
<dbReference type="GO" id="GO:0005829">
    <property type="term" value="C:cytosol"/>
    <property type="evidence" value="ECO:0007669"/>
    <property type="project" value="TreeGrafter"/>
</dbReference>
<dbReference type="GO" id="GO:0005524">
    <property type="term" value="F:ATP binding"/>
    <property type="evidence" value="ECO:0007669"/>
    <property type="project" value="UniProtKB-KW"/>
</dbReference>
<dbReference type="GO" id="GO:0004592">
    <property type="term" value="F:pantoate-beta-alanine ligase activity"/>
    <property type="evidence" value="ECO:0007669"/>
    <property type="project" value="UniProtKB-UniRule"/>
</dbReference>
<dbReference type="GO" id="GO:0015940">
    <property type="term" value="P:pantothenate biosynthetic process"/>
    <property type="evidence" value="ECO:0007669"/>
    <property type="project" value="UniProtKB-UniRule"/>
</dbReference>
<dbReference type="CDD" id="cd00560">
    <property type="entry name" value="PanC"/>
    <property type="match status" value="1"/>
</dbReference>
<dbReference type="FunFam" id="3.40.50.620:FF:000013">
    <property type="entry name" value="Pantothenate synthetase"/>
    <property type="match status" value="1"/>
</dbReference>
<dbReference type="Gene3D" id="3.40.50.620">
    <property type="entry name" value="HUPs"/>
    <property type="match status" value="1"/>
</dbReference>
<dbReference type="Gene3D" id="3.30.1300.10">
    <property type="entry name" value="Pantoate-beta-alanine ligase, C-terminal domain"/>
    <property type="match status" value="1"/>
</dbReference>
<dbReference type="HAMAP" id="MF_00158">
    <property type="entry name" value="PanC"/>
    <property type="match status" value="1"/>
</dbReference>
<dbReference type="InterPro" id="IPR004821">
    <property type="entry name" value="Cyt_trans-like"/>
</dbReference>
<dbReference type="InterPro" id="IPR003721">
    <property type="entry name" value="Pantoate_ligase"/>
</dbReference>
<dbReference type="InterPro" id="IPR042176">
    <property type="entry name" value="Pantoate_ligase_C"/>
</dbReference>
<dbReference type="InterPro" id="IPR014729">
    <property type="entry name" value="Rossmann-like_a/b/a_fold"/>
</dbReference>
<dbReference type="NCBIfam" id="TIGR00125">
    <property type="entry name" value="cyt_tran_rel"/>
    <property type="match status" value="1"/>
</dbReference>
<dbReference type="NCBIfam" id="TIGR00018">
    <property type="entry name" value="panC"/>
    <property type="match status" value="1"/>
</dbReference>
<dbReference type="PANTHER" id="PTHR21299">
    <property type="entry name" value="CYTIDYLATE KINASE/PANTOATE-BETA-ALANINE LIGASE"/>
    <property type="match status" value="1"/>
</dbReference>
<dbReference type="PANTHER" id="PTHR21299:SF1">
    <property type="entry name" value="PANTOATE--BETA-ALANINE LIGASE"/>
    <property type="match status" value="1"/>
</dbReference>
<dbReference type="Pfam" id="PF02569">
    <property type="entry name" value="Pantoate_ligase"/>
    <property type="match status" value="1"/>
</dbReference>
<dbReference type="SUPFAM" id="SSF52374">
    <property type="entry name" value="Nucleotidylyl transferase"/>
    <property type="match status" value="1"/>
</dbReference>
<keyword id="KW-0067">ATP-binding</keyword>
<keyword id="KW-0963">Cytoplasm</keyword>
<keyword id="KW-0436">Ligase</keyword>
<keyword id="KW-0547">Nucleotide-binding</keyword>
<keyword id="KW-0566">Pantothenate biosynthesis</keyword>
<keyword id="KW-1185">Reference proteome</keyword>
<feature type="chain" id="PRO_0000305498" description="Pantothenate synthetase">
    <location>
        <begin position="1"/>
        <end position="286"/>
    </location>
</feature>
<feature type="active site" description="Proton donor" evidence="1">
    <location>
        <position position="37"/>
    </location>
</feature>
<feature type="binding site" evidence="1">
    <location>
        <begin position="30"/>
        <end position="37"/>
    </location>
    <ligand>
        <name>ATP</name>
        <dbReference type="ChEBI" id="CHEBI:30616"/>
    </ligand>
</feature>
<feature type="binding site" evidence="1">
    <location>
        <position position="61"/>
    </location>
    <ligand>
        <name>(R)-pantoate</name>
        <dbReference type="ChEBI" id="CHEBI:15980"/>
    </ligand>
</feature>
<feature type="binding site" evidence="1">
    <location>
        <position position="61"/>
    </location>
    <ligand>
        <name>beta-alanine</name>
        <dbReference type="ChEBI" id="CHEBI:57966"/>
    </ligand>
</feature>
<feature type="binding site" evidence="1">
    <location>
        <begin position="149"/>
        <end position="152"/>
    </location>
    <ligand>
        <name>ATP</name>
        <dbReference type="ChEBI" id="CHEBI:30616"/>
    </ligand>
</feature>
<feature type="binding site" evidence="1">
    <location>
        <position position="155"/>
    </location>
    <ligand>
        <name>(R)-pantoate</name>
        <dbReference type="ChEBI" id="CHEBI:15980"/>
    </ligand>
</feature>
<feature type="binding site" evidence="1">
    <location>
        <position position="178"/>
    </location>
    <ligand>
        <name>ATP</name>
        <dbReference type="ChEBI" id="CHEBI:30616"/>
    </ligand>
</feature>
<feature type="binding site" evidence="1">
    <location>
        <begin position="186"/>
        <end position="189"/>
    </location>
    <ligand>
        <name>ATP</name>
        <dbReference type="ChEBI" id="CHEBI:30616"/>
    </ligand>
</feature>
<accession>Q3JCP8</accession>
<comment type="function">
    <text evidence="1">Catalyzes the condensation of pantoate with beta-alanine in an ATP-dependent reaction via a pantoyl-adenylate intermediate.</text>
</comment>
<comment type="catalytic activity">
    <reaction evidence="1">
        <text>(R)-pantoate + beta-alanine + ATP = (R)-pantothenate + AMP + diphosphate + H(+)</text>
        <dbReference type="Rhea" id="RHEA:10912"/>
        <dbReference type="ChEBI" id="CHEBI:15378"/>
        <dbReference type="ChEBI" id="CHEBI:15980"/>
        <dbReference type="ChEBI" id="CHEBI:29032"/>
        <dbReference type="ChEBI" id="CHEBI:30616"/>
        <dbReference type="ChEBI" id="CHEBI:33019"/>
        <dbReference type="ChEBI" id="CHEBI:57966"/>
        <dbReference type="ChEBI" id="CHEBI:456215"/>
        <dbReference type="EC" id="6.3.2.1"/>
    </reaction>
</comment>
<comment type="pathway">
    <text evidence="1">Cofactor biosynthesis; (R)-pantothenate biosynthesis; (R)-pantothenate from (R)-pantoate and beta-alanine: step 1/1.</text>
</comment>
<comment type="subunit">
    <text evidence="1">Homodimer.</text>
</comment>
<comment type="subcellular location">
    <subcellularLocation>
        <location evidence="1">Cytoplasm</location>
    </subcellularLocation>
</comment>
<comment type="miscellaneous">
    <text evidence="1">The reaction proceeds by a bi uni uni bi ping pong mechanism.</text>
</comment>
<comment type="similarity">
    <text evidence="1">Belongs to the pantothenate synthetase family.</text>
</comment>